<dbReference type="EC" id="4.6.1.17" evidence="1"/>
<dbReference type="EMBL" id="AP009351">
    <property type="protein sequence ID" value="BAF68446.1"/>
    <property type="molecule type" value="Genomic_DNA"/>
</dbReference>
<dbReference type="RefSeq" id="WP_000134528.1">
    <property type="nucleotide sequence ID" value="NZ_JBBIAE010000006.1"/>
</dbReference>
<dbReference type="SMR" id="A6QJB4"/>
<dbReference type="KEGG" id="sae:NWMN_2174"/>
<dbReference type="HOGENOM" id="CLU_074693_1_1_9"/>
<dbReference type="UniPathway" id="UPA00344"/>
<dbReference type="Proteomes" id="UP000006386">
    <property type="component" value="Chromosome"/>
</dbReference>
<dbReference type="GO" id="GO:0061799">
    <property type="term" value="F:cyclic pyranopterin monophosphate synthase activity"/>
    <property type="evidence" value="ECO:0007669"/>
    <property type="project" value="UniProtKB-UniRule"/>
</dbReference>
<dbReference type="GO" id="GO:0006777">
    <property type="term" value="P:Mo-molybdopterin cofactor biosynthetic process"/>
    <property type="evidence" value="ECO:0007669"/>
    <property type="project" value="UniProtKB-UniRule"/>
</dbReference>
<dbReference type="CDD" id="cd01420">
    <property type="entry name" value="MoaC_PE"/>
    <property type="match status" value="1"/>
</dbReference>
<dbReference type="Gene3D" id="3.30.70.640">
    <property type="entry name" value="Molybdopterin cofactor biosynthesis C (MoaC) domain"/>
    <property type="match status" value="1"/>
</dbReference>
<dbReference type="HAMAP" id="MF_01224_B">
    <property type="entry name" value="MoaC_B"/>
    <property type="match status" value="1"/>
</dbReference>
<dbReference type="InterPro" id="IPR023045">
    <property type="entry name" value="MoaC"/>
</dbReference>
<dbReference type="InterPro" id="IPR047594">
    <property type="entry name" value="MoaC_bact/euk"/>
</dbReference>
<dbReference type="InterPro" id="IPR036522">
    <property type="entry name" value="MoaC_sf"/>
</dbReference>
<dbReference type="InterPro" id="IPR050105">
    <property type="entry name" value="MoCo_biosynth_MoaA/MoaC"/>
</dbReference>
<dbReference type="InterPro" id="IPR002820">
    <property type="entry name" value="Mopterin_CF_biosynth-C_dom"/>
</dbReference>
<dbReference type="NCBIfam" id="TIGR00581">
    <property type="entry name" value="moaC"/>
    <property type="match status" value="1"/>
</dbReference>
<dbReference type="NCBIfam" id="NF006870">
    <property type="entry name" value="PRK09364.1"/>
    <property type="match status" value="1"/>
</dbReference>
<dbReference type="PANTHER" id="PTHR22960">
    <property type="entry name" value="MOLYBDOPTERIN COFACTOR SYNTHESIS PROTEIN A"/>
    <property type="match status" value="1"/>
</dbReference>
<dbReference type="Pfam" id="PF01967">
    <property type="entry name" value="MoaC"/>
    <property type="match status" value="1"/>
</dbReference>
<dbReference type="SUPFAM" id="SSF55040">
    <property type="entry name" value="Molybdenum cofactor biosynthesis protein C, MoaC"/>
    <property type="match status" value="1"/>
</dbReference>
<reference key="1">
    <citation type="journal article" date="2008" name="J. Bacteriol.">
        <title>Genome sequence of Staphylococcus aureus strain Newman and comparative analysis of staphylococcal genomes: polymorphism and evolution of two major pathogenicity islands.</title>
        <authorList>
            <person name="Baba T."/>
            <person name="Bae T."/>
            <person name="Schneewind O."/>
            <person name="Takeuchi F."/>
            <person name="Hiramatsu K."/>
        </authorList>
    </citation>
    <scope>NUCLEOTIDE SEQUENCE [LARGE SCALE GENOMIC DNA]</scope>
    <source>
        <strain>Newman</strain>
    </source>
</reference>
<keyword id="KW-0456">Lyase</keyword>
<keyword id="KW-0501">Molybdenum cofactor biosynthesis</keyword>
<comment type="function">
    <text evidence="1">Catalyzes the conversion of (8S)-3',8-cyclo-7,8-dihydroguanosine 5'-triphosphate to cyclic pyranopterin monophosphate (cPMP).</text>
</comment>
<comment type="catalytic activity">
    <reaction evidence="1">
        <text>(8S)-3',8-cyclo-7,8-dihydroguanosine 5'-triphosphate = cyclic pyranopterin phosphate + diphosphate</text>
        <dbReference type="Rhea" id="RHEA:49580"/>
        <dbReference type="ChEBI" id="CHEBI:33019"/>
        <dbReference type="ChEBI" id="CHEBI:59648"/>
        <dbReference type="ChEBI" id="CHEBI:131766"/>
        <dbReference type="EC" id="4.6.1.17"/>
    </reaction>
</comment>
<comment type="pathway">
    <text evidence="1">Cofactor biosynthesis; molybdopterin biosynthesis.</text>
</comment>
<comment type="subunit">
    <text evidence="1">Homohexamer; trimer of dimers.</text>
</comment>
<comment type="similarity">
    <text evidence="1">Belongs to the MoaC family.</text>
</comment>
<feature type="chain" id="PRO_1000073160" description="Cyclic pyranopterin monophosphate synthase">
    <location>
        <begin position="1"/>
        <end position="164"/>
    </location>
</feature>
<feature type="active site" evidence="1">
    <location>
        <position position="131"/>
    </location>
</feature>
<feature type="binding site" evidence="1">
    <location>
        <begin position="75"/>
        <end position="77"/>
    </location>
    <ligand>
        <name>substrate</name>
    </ligand>
</feature>
<feature type="binding site" evidence="1">
    <location>
        <begin position="116"/>
        <end position="117"/>
    </location>
    <ligand>
        <name>substrate</name>
    </ligand>
</feature>
<sequence>MTEFTHINQQGHAKMVDVSDKQITKRTAVAHSSITVNETIFKQISNNTNTKGNVLNTAQIAGIMAAKNTSTLIPMCHPLPLTGIDVHFSWDETNAPLYTLNIQTTVSTTGKTGVEMEALTAASATALTIYDMTKAVDKGMIIGETYLESKSGGKSGDFQRQSNQ</sequence>
<proteinExistence type="inferred from homology"/>
<evidence type="ECO:0000255" key="1">
    <source>
        <dbReference type="HAMAP-Rule" id="MF_01224"/>
    </source>
</evidence>
<accession>A6QJB4</accession>
<protein>
    <recommendedName>
        <fullName evidence="1">Cyclic pyranopterin monophosphate synthase</fullName>
        <ecNumber evidence="1">4.6.1.17</ecNumber>
    </recommendedName>
    <alternativeName>
        <fullName evidence="1">Molybdenum cofactor biosynthesis protein C</fullName>
    </alternativeName>
</protein>
<organism>
    <name type="scientific">Staphylococcus aureus (strain Newman)</name>
    <dbReference type="NCBI Taxonomy" id="426430"/>
    <lineage>
        <taxon>Bacteria</taxon>
        <taxon>Bacillati</taxon>
        <taxon>Bacillota</taxon>
        <taxon>Bacilli</taxon>
        <taxon>Bacillales</taxon>
        <taxon>Staphylococcaceae</taxon>
        <taxon>Staphylococcus</taxon>
    </lineage>
</organism>
<gene>
    <name evidence="1" type="primary">moaC</name>
    <name type="ordered locus">NWMN_2174</name>
</gene>
<name>MOAC_STAAE</name>